<keyword id="KW-0004">4Fe-4S</keyword>
<keyword id="KW-0028">Amino-acid biosynthesis</keyword>
<keyword id="KW-0100">Branched-chain amino acid biosynthesis</keyword>
<keyword id="KW-0408">Iron</keyword>
<keyword id="KW-0411">Iron-sulfur</keyword>
<keyword id="KW-0432">Leucine biosynthesis</keyword>
<keyword id="KW-0456">Lyase</keyword>
<keyword id="KW-0479">Metal-binding</keyword>
<keyword id="KW-1185">Reference proteome</keyword>
<organism>
    <name type="scientific">Rhizobium etli (strain ATCC 51251 / DSM 11541 / JCM 21823 / NBRC 15573 / CFN 42)</name>
    <dbReference type="NCBI Taxonomy" id="347834"/>
    <lineage>
        <taxon>Bacteria</taxon>
        <taxon>Pseudomonadati</taxon>
        <taxon>Pseudomonadota</taxon>
        <taxon>Alphaproteobacteria</taxon>
        <taxon>Hyphomicrobiales</taxon>
        <taxon>Rhizobiaceae</taxon>
        <taxon>Rhizobium/Agrobacterium group</taxon>
        <taxon>Rhizobium</taxon>
    </lineage>
</organism>
<evidence type="ECO:0000255" key="1">
    <source>
        <dbReference type="HAMAP-Rule" id="MF_01026"/>
    </source>
</evidence>
<name>LEUC_RHIEC</name>
<gene>
    <name evidence="1" type="primary">leuC</name>
    <name type="ordered locus">RHE_CH03965</name>
</gene>
<proteinExistence type="inferred from homology"/>
<feature type="chain" id="PRO_1000063596" description="3-isopropylmalate dehydratase large subunit">
    <location>
        <begin position="1"/>
        <end position="469"/>
    </location>
</feature>
<feature type="binding site" evidence="1">
    <location>
        <position position="350"/>
    </location>
    <ligand>
        <name>[4Fe-4S] cluster</name>
        <dbReference type="ChEBI" id="CHEBI:49883"/>
    </ligand>
</feature>
<feature type="binding site" evidence="1">
    <location>
        <position position="410"/>
    </location>
    <ligand>
        <name>[4Fe-4S] cluster</name>
        <dbReference type="ChEBI" id="CHEBI:49883"/>
    </ligand>
</feature>
<feature type="binding site" evidence="1">
    <location>
        <position position="413"/>
    </location>
    <ligand>
        <name>[4Fe-4S] cluster</name>
        <dbReference type="ChEBI" id="CHEBI:49883"/>
    </ligand>
</feature>
<dbReference type="EC" id="4.2.1.33" evidence="1"/>
<dbReference type="EMBL" id="CP000133">
    <property type="protein sequence ID" value="ABC92710.1"/>
    <property type="molecule type" value="Genomic_DNA"/>
</dbReference>
<dbReference type="EMBL" id="AJ422137">
    <property type="protein sequence ID" value="CAD19516.1"/>
    <property type="molecule type" value="Genomic_DNA"/>
</dbReference>
<dbReference type="RefSeq" id="WP_011427156.1">
    <property type="nucleotide sequence ID" value="NC_007761.1"/>
</dbReference>
<dbReference type="SMR" id="Q2K376"/>
<dbReference type="KEGG" id="ret:RHE_CH03965"/>
<dbReference type="eggNOG" id="COG0065">
    <property type="taxonomic scope" value="Bacteria"/>
</dbReference>
<dbReference type="HOGENOM" id="CLU_006714_3_4_5"/>
<dbReference type="OrthoDB" id="9802769at2"/>
<dbReference type="UniPathway" id="UPA00048">
    <property type="reaction ID" value="UER00071"/>
</dbReference>
<dbReference type="Proteomes" id="UP000001936">
    <property type="component" value="Chromosome"/>
</dbReference>
<dbReference type="GO" id="GO:0003861">
    <property type="term" value="F:3-isopropylmalate dehydratase activity"/>
    <property type="evidence" value="ECO:0007669"/>
    <property type="project" value="UniProtKB-UniRule"/>
</dbReference>
<dbReference type="GO" id="GO:0051539">
    <property type="term" value="F:4 iron, 4 sulfur cluster binding"/>
    <property type="evidence" value="ECO:0007669"/>
    <property type="project" value="UniProtKB-KW"/>
</dbReference>
<dbReference type="GO" id="GO:0046872">
    <property type="term" value="F:metal ion binding"/>
    <property type="evidence" value="ECO:0007669"/>
    <property type="project" value="UniProtKB-KW"/>
</dbReference>
<dbReference type="GO" id="GO:0009098">
    <property type="term" value="P:L-leucine biosynthetic process"/>
    <property type="evidence" value="ECO:0007669"/>
    <property type="project" value="UniProtKB-UniRule"/>
</dbReference>
<dbReference type="CDD" id="cd01583">
    <property type="entry name" value="IPMI"/>
    <property type="match status" value="1"/>
</dbReference>
<dbReference type="FunFam" id="3.30.499.10:FF:000006">
    <property type="entry name" value="3-isopropylmalate dehydratase large subunit"/>
    <property type="match status" value="1"/>
</dbReference>
<dbReference type="FunFam" id="3.30.499.10:FF:000007">
    <property type="entry name" value="3-isopropylmalate dehydratase large subunit"/>
    <property type="match status" value="1"/>
</dbReference>
<dbReference type="Gene3D" id="3.30.499.10">
    <property type="entry name" value="Aconitase, domain 3"/>
    <property type="match status" value="2"/>
</dbReference>
<dbReference type="HAMAP" id="MF_01026">
    <property type="entry name" value="LeuC_type1"/>
    <property type="match status" value="1"/>
</dbReference>
<dbReference type="InterPro" id="IPR004430">
    <property type="entry name" value="3-IsopropMal_deHydase_lsu"/>
</dbReference>
<dbReference type="InterPro" id="IPR015931">
    <property type="entry name" value="Acnase/IPM_dHydase_lsu_aba_1/3"/>
</dbReference>
<dbReference type="InterPro" id="IPR001030">
    <property type="entry name" value="Acoase/IPM_deHydtase_lsu_aba"/>
</dbReference>
<dbReference type="InterPro" id="IPR018136">
    <property type="entry name" value="Aconitase_4Fe-4S_BS"/>
</dbReference>
<dbReference type="InterPro" id="IPR036008">
    <property type="entry name" value="Aconitase_4Fe-4S_dom"/>
</dbReference>
<dbReference type="InterPro" id="IPR050067">
    <property type="entry name" value="IPM_dehydratase_rel_enz"/>
</dbReference>
<dbReference type="InterPro" id="IPR033941">
    <property type="entry name" value="IPMI_cat"/>
</dbReference>
<dbReference type="NCBIfam" id="TIGR00170">
    <property type="entry name" value="leuC"/>
    <property type="match status" value="1"/>
</dbReference>
<dbReference type="NCBIfam" id="NF004016">
    <property type="entry name" value="PRK05478.1"/>
    <property type="match status" value="1"/>
</dbReference>
<dbReference type="NCBIfam" id="NF009116">
    <property type="entry name" value="PRK12466.1"/>
    <property type="match status" value="1"/>
</dbReference>
<dbReference type="PANTHER" id="PTHR43822:SF9">
    <property type="entry name" value="3-ISOPROPYLMALATE DEHYDRATASE"/>
    <property type="match status" value="1"/>
</dbReference>
<dbReference type="PANTHER" id="PTHR43822">
    <property type="entry name" value="HOMOACONITASE, MITOCHONDRIAL-RELATED"/>
    <property type="match status" value="1"/>
</dbReference>
<dbReference type="Pfam" id="PF00330">
    <property type="entry name" value="Aconitase"/>
    <property type="match status" value="1"/>
</dbReference>
<dbReference type="PRINTS" id="PR00415">
    <property type="entry name" value="ACONITASE"/>
</dbReference>
<dbReference type="SUPFAM" id="SSF53732">
    <property type="entry name" value="Aconitase iron-sulfur domain"/>
    <property type="match status" value="1"/>
</dbReference>
<dbReference type="PROSITE" id="PS00450">
    <property type="entry name" value="ACONITASE_1"/>
    <property type="match status" value="1"/>
</dbReference>
<dbReference type="PROSITE" id="PS01244">
    <property type="entry name" value="ACONITASE_2"/>
    <property type="match status" value="1"/>
</dbReference>
<protein>
    <recommendedName>
        <fullName evidence="1">3-isopropylmalate dehydratase large subunit</fullName>
        <ecNumber evidence="1">4.2.1.33</ecNumber>
    </recommendedName>
    <alternativeName>
        <fullName evidence="1">Alpha-IPM isomerase</fullName>
        <shortName evidence="1">IPMI</shortName>
    </alternativeName>
    <alternativeName>
        <fullName evidence="1">Isopropylmalate isomerase</fullName>
    </alternativeName>
</protein>
<sequence length="469" mass="50847">MSAPRTLYDKIWDDHLVDEQADGTCLLYIDRHLVHEVTSPQAFEGLRMSGRKVRAPEKTLAVVDHNVPTSPDRHLGIKNEESRIQVEQLAKNAAEFNVEYYSENDKRQGIVHIIGPEQGFTLPGMTIVCGDSHTSTHGAFGSLAHGIGTSEVEHVLATQTLIQKKAKNMLVQVDGQLPAGVTAKDIVLAIIGEIGTAGGTGYVIEYAGEAIRSLSMEGRMTICNMSIEGGARAGLIAPDEITFEYIKGKPRAPKGEALEQAIAYWKTLKSDEGAHFDRIVKLNAAELPPIVSWGSSPEDVVSVQGIVPNPDEIQDETKRASKWRALDYMGLKPGTKMTDIAVDRVFIGSCTNGRIEDLRAAAKVVEGKTVASTVNAMIVPGSGLVKEQAEAEGLDKIFKAAGFDWREPGCSMCLAMNDDRLKPGERCASTSNRNFEGRQGFKGRTHLVSPTMAAAAAIAGHFVDIREWN</sequence>
<reference key="1">
    <citation type="journal article" date="2006" name="Proc. Natl. Acad. Sci. U.S.A.">
        <title>The partitioned Rhizobium etli genome: genetic and metabolic redundancy in seven interacting replicons.</title>
        <authorList>
            <person name="Gonzalez V."/>
            <person name="Santamaria R.I."/>
            <person name="Bustos P."/>
            <person name="Hernandez-Gonzalez I."/>
            <person name="Medrano-Soto A."/>
            <person name="Moreno-Hagelsieb G."/>
            <person name="Janga S.C."/>
            <person name="Ramirez M.A."/>
            <person name="Jimenez-Jacinto V."/>
            <person name="Collado-Vides J."/>
            <person name="Davila G."/>
        </authorList>
    </citation>
    <scope>NUCLEOTIDE SEQUENCE [LARGE SCALE GENOMIC DNA]</scope>
    <source>
        <strain>ATCC 51251 / DSM 11541 / JCM 21823 / NBRC 15573 / CFN 42</strain>
    </source>
</reference>
<reference key="2">
    <citation type="journal article" date="2002" name="Mol. Plant Microbe Interact.">
        <title>Auxotrophic mutant strains of Rhizobium etli reveal new nodule development phenotypes.</title>
        <authorList>
            <person name="Ferraioli S."/>
            <person name="Tate R."/>
            <person name="Cermola M."/>
            <person name="Favre R."/>
            <person name="Iaccarino M."/>
            <person name="Patriarca E.J."/>
        </authorList>
    </citation>
    <scope>NUCLEOTIDE SEQUENCE [GENOMIC DNA] OF 7-180</scope>
    <source>
        <strain>CE3</strain>
    </source>
</reference>
<comment type="function">
    <text evidence="1">Catalyzes the isomerization between 2-isopropylmalate and 3-isopropylmalate, via the formation of 2-isopropylmaleate.</text>
</comment>
<comment type="catalytic activity">
    <reaction evidence="1">
        <text>(2R,3S)-3-isopropylmalate = (2S)-2-isopropylmalate</text>
        <dbReference type="Rhea" id="RHEA:32287"/>
        <dbReference type="ChEBI" id="CHEBI:1178"/>
        <dbReference type="ChEBI" id="CHEBI:35121"/>
        <dbReference type="EC" id="4.2.1.33"/>
    </reaction>
</comment>
<comment type="cofactor">
    <cofactor evidence="1">
        <name>[4Fe-4S] cluster</name>
        <dbReference type="ChEBI" id="CHEBI:49883"/>
    </cofactor>
    <text evidence="1">Binds 1 [4Fe-4S] cluster per subunit.</text>
</comment>
<comment type="pathway">
    <text evidence="1">Amino-acid biosynthesis; L-leucine biosynthesis; L-leucine from 3-methyl-2-oxobutanoate: step 2/4.</text>
</comment>
<comment type="subunit">
    <text evidence="1">Heterodimer of LeuC and LeuD.</text>
</comment>
<comment type="similarity">
    <text evidence="1">Belongs to the aconitase/IPM isomerase family. LeuC type 1 subfamily.</text>
</comment>
<accession>Q2K376</accession>
<accession>Q8VMA6</accession>